<dbReference type="EMBL" id="CP000736">
    <property type="protein sequence ID" value="ABR51824.1"/>
    <property type="molecule type" value="Genomic_DNA"/>
</dbReference>
<dbReference type="SMR" id="A6U056"/>
<dbReference type="KEGG" id="sah:SaurJH1_0968"/>
<dbReference type="HOGENOM" id="CLU_007100_9_2_9"/>
<dbReference type="GO" id="GO:0005886">
    <property type="term" value="C:plasma membrane"/>
    <property type="evidence" value="ECO:0007669"/>
    <property type="project" value="UniProtKB-SubCell"/>
</dbReference>
<dbReference type="GO" id="GO:0008137">
    <property type="term" value="F:NADH dehydrogenase (ubiquinone) activity"/>
    <property type="evidence" value="ECO:0007669"/>
    <property type="project" value="InterPro"/>
</dbReference>
<dbReference type="GO" id="GO:0015386">
    <property type="term" value="F:potassium:proton antiporter activity"/>
    <property type="evidence" value="ECO:0007669"/>
    <property type="project" value="InterPro"/>
</dbReference>
<dbReference type="GO" id="GO:0042773">
    <property type="term" value="P:ATP synthesis coupled electron transport"/>
    <property type="evidence" value="ECO:0007669"/>
    <property type="project" value="InterPro"/>
</dbReference>
<dbReference type="GO" id="GO:0006814">
    <property type="term" value="P:sodium ion transport"/>
    <property type="evidence" value="ECO:0007669"/>
    <property type="project" value="UniProtKB-KW"/>
</dbReference>
<dbReference type="InterPro" id="IPR050586">
    <property type="entry name" value="CPA3_Na-H_Antiporter_D"/>
</dbReference>
<dbReference type="InterPro" id="IPR004775">
    <property type="entry name" value="MnhD1"/>
</dbReference>
<dbReference type="InterPro" id="IPR003918">
    <property type="entry name" value="NADH_UbQ_OxRdtase"/>
</dbReference>
<dbReference type="InterPro" id="IPR001750">
    <property type="entry name" value="ND/Mrp_TM"/>
</dbReference>
<dbReference type="NCBIfam" id="TIGR00944">
    <property type="entry name" value="2a6301s04"/>
    <property type="match status" value="1"/>
</dbReference>
<dbReference type="NCBIfam" id="NF005818">
    <property type="entry name" value="PRK07691.1"/>
    <property type="match status" value="1"/>
</dbReference>
<dbReference type="PANTHER" id="PTHR42703:SF1">
    <property type="entry name" value="NA(+)_H(+) ANTIPORTER SUBUNIT D1"/>
    <property type="match status" value="1"/>
</dbReference>
<dbReference type="PANTHER" id="PTHR42703">
    <property type="entry name" value="NADH DEHYDROGENASE"/>
    <property type="match status" value="1"/>
</dbReference>
<dbReference type="Pfam" id="PF00361">
    <property type="entry name" value="Proton_antipo_M"/>
    <property type="match status" value="1"/>
</dbReference>
<dbReference type="PRINTS" id="PR01437">
    <property type="entry name" value="NUOXDRDTASE4"/>
</dbReference>
<organism>
    <name type="scientific">Staphylococcus aureus (strain JH1)</name>
    <dbReference type="NCBI Taxonomy" id="359787"/>
    <lineage>
        <taxon>Bacteria</taxon>
        <taxon>Bacillati</taxon>
        <taxon>Bacillota</taxon>
        <taxon>Bacilli</taxon>
        <taxon>Bacillales</taxon>
        <taxon>Staphylococcaceae</taxon>
        <taxon>Staphylococcus</taxon>
    </lineage>
</organism>
<evidence type="ECO:0000250" key="1"/>
<evidence type="ECO:0000255" key="2"/>
<evidence type="ECO:0000305" key="3"/>
<keyword id="KW-0050">Antiport</keyword>
<keyword id="KW-1003">Cell membrane</keyword>
<keyword id="KW-0375">Hydrogen ion transport</keyword>
<keyword id="KW-0406">Ion transport</keyword>
<keyword id="KW-0472">Membrane</keyword>
<keyword id="KW-0915">Sodium</keyword>
<keyword id="KW-0739">Sodium transport</keyword>
<keyword id="KW-0812">Transmembrane</keyword>
<keyword id="KW-1133">Transmembrane helix</keyword>
<keyword id="KW-0813">Transport</keyword>
<accession>A6U056</accession>
<comment type="function">
    <text evidence="1">Mnh complex is a Na(+)/H(+) antiporter involved in Na(+) excretion.</text>
</comment>
<comment type="subunit">
    <text evidence="1">May form a heterooligomeric complex that consists of seven subunits: mnhA1, mnhB1, mnhC1, mnhD1, mnhE1, mnhF1 and mnhG1.</text>
</comment>
<comment type="subcellular location">
    <subcellularLocation>
        <location evidence="3">Cell membrane</location>
        <topology evidence="3">Multi-pass membrane protein</topology>
    </subcellularLocation>
</comment>
<comment type="similarity">
    <text evidence="3">Belongs to the CPA3 antiporters (TC 2.A.63) subunit D family.</text>
</comment>
<name>MNHD1_STAA2</name>
<protein>
    <recommendedName>
        <fullName>Na(+)/H(+) antiporter subunit D1</fullName>
    </recommendedName>
    <alternativeName>
        <fullName>Mnh complex subunit D1</fullName>
    </alternativeName>
</protein>
<sequence length="498" mass="54756">MIESNMLVLTLVIPVITAILLVFIGKRPIIKRYVALGGTLLTLVAAIINLANVVKHGPIRVELGSWKAPYSIVFVLDIFSALLIITSIIITAIVILYSYQTIGIERERYYYYFSVLFMLIGIIGAFTTGDIFNLFVFFEVFLMSSYFLLVIGSTKIQLQETIKYVLVNVVSSSFFVMGVAILYSVVGTLNLADISNKLANLSAHDSGLVNIVFILFIFVFATKAGVFPMFVWLPSAYYAPPIPIIAFFGALLTKVGVYAIARTLSLFFSDNVSFSHYVILFLALLTIIFGCVGAVAYANIKKIILYNVMIAVGVILVGVAMMTESGMIGAIYYTLHDMLVKLALFLLIGIMIKITGTADLRQFGGLIKRYPVLGWSFFIAALSLAGIPPLSGFYGKFFIVQSTFERGFYLSGVIVLLSSLVVLYSVIRIFLQGFFGQPKGYDLNNKVDVKYLTTIAIVAVVITVLYGLSADYLYPMVKAGAETFYNPSTYVKAVLGGK</sequence>
<reference key="1">
    <citation type="submission" date="2007-06" db="EMBL/GenBank/DDBJ databases">
        <title>Complete sequence of chromosome of Staphylococcus aureus subsp. aureus JH1.</title>
        <authorList>
            <consortium name="US DOE Joint Genome Institute"/>
            <person name="Copeland A."/>
            <person name="Lucas S."/>
            <person name="Lapidus A."/>
            <person name="Barry K."/>
            <person name="Detter J.C."/>
            <person name="Glavina del Rio T."/>
            <person name="Hammon N."/>
            <person name="Israni S."/>
            <person name="Dalin E."/>
            <person name="Tice H."/>
            <person name="Pitluck S."/>
            <person name="Chain P."/>
            <person name="Malfatti S."/>
            <person name="Shin M."/>
            <person name="Vergez L."/>
            <person name="Schmutz J."/>
            <person name="Larimer F."/>
            <person name="Land M."/>
            <person name="Hauser L."/>
            <person name="Kyrpides N."/>
            <person name="Ivanova N."/>
            <person name="Tomasz A."/>
            <person name="Richardson P."/>
        </authorList>
    </citation>
    <scope>NUCLEOTIDE SEQUENCE [LARGE SCALE GENOMIC DNA]</scope>
    <source>
        <strain>JH1</strain>
    </source>
</reference>
<proteinExistence type="inferred from homology"/>
<gene>
    <name type="primary">mnhD1</name>
    <name type="ordered locus">SaurJH1_0968</name>
</gene>
<feature type="chain" id="PRO_0000372130" description="Na(+)/H(+) antiporter subunit D1">
    <location>
        <begin position="1"/>
        <end position="498"/>
    </location>
</feature>
<feature type="transmembrane region" description="Helical" evidence="2">
    <location>
        <begin position="5"/>
        <end position="25"/>
    </location>
</feature>
<feature type="transmembrane region" description="Helical" evidence="2">
    <location>
        <begin position="34"/>
        <end position="54"/>
    </location>
</feature>
<feature type="transmembrane region" description="Helical" evidence="2">
    <location>
        <begin position="75"/>
        <end position="95"/>
    </location>
</feature>
<feature type="transmembrane region" description="Helical" evidence="2">
    <location>
        <begin position="109"/>
        <end position="129"/>
    </location>
</feature>
<feature type="transmembrane region" description="Helical" evidence="2">
    <location>
        <begin position="131"/>
        <end position="151"/>
    </location>
</feature>
<feature type="transmembrane region" description="Helical" evidence="2">
    <location>
        <begin position="169"/>
        <end position="189"/>
    </location>
</feature>
<feature type="transmembrane region" description="Helical" evidence="2">
    <location>
        <begin position="211"/>
        <end position="231"/>
    </location>
</feature>
<feature type="transmembrane region" description="Helical" evidence="2">
    <location>
        <begin position="241"/>
        <end position="261"/>
    </location>
</feature>
<feature type="transmembrane region" description="Helical" evidence="2">
    <location>
        <begin position="278"/>
        <end position="298"/>
    </location>
</feature>
<feature type="transmembrane region" description="Helical" evidence="2">
    <location>
        <begin position="303"/>
        <end position="323"/>
    </location>
</feature>
<feature type="transmembrane region" description="Helical" evidence="2">
    <location>
        <begin position="338"/>
        <end position="358"/>
    </location>
</feature>
<feature type="transmembrane region" description="Helical" evidence="2">
    <location>
        <begin position="373"/>
        <end position="393"/>
    </location>
</feature>
<feature type="transmembrane region" description="Helical" evidence="2">
    <location>
        <begin position="407"/>
        <end position="427"/>
    </location>
</feature>
<feature type="transmembrane region" description="Helical" evidence="2">
    <location>
        <begin position="455"/>
        <end position="475"/>
    </location>
</feature>